<dbReference type="EC" id="2.7.4.16" evidence="1"/>
<dbReference type="EMBL" id="AE004437">
    <property type="protein sequence ID" value="AAG20179.1"/>
    <property type="molecule type" value="Genomic_DNA"/>
</dbReference>
<dbReference type="PIR" id="G84351">
    <property type="entry name" value="G84351"/>
</dbReference>
<dbReference type="RefSeq" id="WP_010903480.1">
    <property type="nucleotide sequence ID" value="NC_002607.1"/>
</dbReference>
<dbReference type="SMR" id="Q9HNP1"/>
<dbReference type="FunCoup" id="Q9HNP1">
    <property type="interactions" value="71"/>
</dbReference>
<dbReference type="STRING" id="64091.VNG_2011G"/>
<dbReference type="PaxDb" id="64091-VNG_2011G"/>
<dbReference type="GeneID" id="68694604"/>
<dbReference type="KEGG" id="hal:VNG_2011G"/>
<dbReference type="PATRIC" id="fig|64091.14.peg.1536"/>
<dbReference type="HOGENOM" id="CLU_046964_2_0_2"/>
<dbReference type="InParanoid" id="Q9HNP1"/>
<dbReference type="OrthoDB" id="45909at2157"/>
<dbReference type="PhylomeDB" id="Q9HNP1"/>
<dbReference type="UniPathway" id="UPA00060">
    <property type="reaction ID" value="UER00142"/>
</dbReference>
<dbReference type="Proteomes" id="UP000000554">
    <property type="component" value="Chromosome"/>
</dbReference>
<dbReference type="GO" id="GO:0005524">
    <property type="term" value="F:ATP binding"/>
    <property type="evidence" value="ECO:0007669"/>
    <property type="project" value="UniProtKB-UniRule"/>
</dbReference>
<dbReference type="GO" id="GO:0000287">
    <property type="term" value="F:magnesium ion binding"/>
    <property type="evidence" value="ECO:0007669"/>
    <property type="project" value="UniProtKB-UniRule"/>
</dbReference>
<dbReference type="GO" id="GO:0009030">
    <property type="term" value="F:thiamine-phosphate kinase activity"/>
    <property type="evidence" value="ECO:0007669"/>
    <property type="project" value="UniProtKB-UniRule"/>
</dbReference>
<dbReference type="GO" id="GO:0009228">
    <property type="term" value="P:thiamine biosynthetic process"/>
    <property type="evidence" value="ECO:0007669"/>
    <property type="project" value="UniProtKB-KW"/>
</dbReference>
<dbReference type="GO" id="GO:0009229">
    <property type="term" value="P:thiamine diphosphate biosynthetic process"/>
    <property type="evidence" value="ECO:0007669"/>
    <property type="project" value="UniProtKB-UniRule"/>
</dbReference>
<dbReference type="CDD" id="cd02194">
    <property type="entry name" value="ThiL"/>
    <property type="match status" value="1"/>
</dbReference>
<dbReference type="Gene3D" id="3.90.650.10">
    <property type="entry name" value="PurM-like C-terminal domain"/>
    <property type="match status" value="1"/>
</dbReference>
<dbReference type="Gene3D" id="3.30.1330.10">
    <property type="entry name" value="PurM-like, N-terminal domain"/>
    <property type="match status" value="1"/>
</dbReference>
<dbReference type="HAMAP" id="MF_02128">
    <property type="entry name" value="TMP_kinase"/>
    <property type="match status" value="1"/>
</dbReference>
<dbReference type="InterPro" id="IPR010918">
    <property type="entry name" value="PurM-like_C_dom"/>
</dbReference>
<dbReference type="InterPro" id="IPR036676">
    <property type="entry name" value="PurM-like_C_sf"/>
</dbReference>
<dbReference type="InterPro" id="IPR016188">
    <property type="entry name" value="PurM-like_N"/>
</dbReference>
<dbReference type="InterPro" id="IPR036921">
    <property type="entry name" value="PurM-like_N_sf"/>
</dbReference>
<dbReference type="InterPro" id="IPR006283">
    <property type="entry name" value="ThiL-like"/>
</dbReference>
<dbReference type="NCBIfam" id="TIGR01379">
    <property type="entry name" value="thiL"/>
    <property type="match status" value="1"/>
</dbReference>
<dbReference type="PANTHER" id="PTHR30270">
    <property type="entry name" value="THIAMINE-MONOPHOSPHATE KINASE"/>
    <property type="match status" value="1"/>
</dbReference>
<dbReference type="PANTHER" id="PTHR30270:SF3">
    <property type="entry name" value="THIAMINE-MONOPHOSPHATE KINASE"/>
    <property type="match status" value="1"/>
</dbReference>
<dbReference type="Pfam" id="PF00586">
    <property type="entry name" value="AIRS"/>
    <property type="match status" value="1"/>
</dbReference>
<dbReference type="Pfam" id="PF02769">
    <property type="entry name" value="AIRS_C"/>
    <property type="match status" value="1"/>
</dbReference>
<dbReference type="PIRSF" id="PIRSF005303">
    <property type="entry name" value="Thiam_monoph_kin"/>
    <property type="match status" value="1"/>
</dbReference>
<dbReference type="SUPFAM" id="SSF56042">
    <property type="entry name" value="PurM C-terminal domain-like"/>
    <property type="match status" value="1"/>
</dbReference>
<dbReference type="SUPFAM" id="SSF55326">
    <property type="entry name" value="PurM N-terminal domain-like"/>
    <property type="match status" value="1"/>
</dbReference>
<reference key="1">
    <citation type="journal article" date="2000" name="Proc. Natl. Acad. Sci. U.S.A.">
        <title>Genome sequence of Halobacterium species NRC-1.</title>
        <authorList>
            <person name="Ng W.V."/>
            <person name="Kennedy S.P."/>
            <person name="Mahairas G.G."/>
            <person name="Berquist B."/>
            <person name="Pan M."/>
            <person name="Shukla H.D."/>
            <person name="Lasky S.R."/>
            <person name="Baliga N.S."/>
            <person name="Thorsson V."/>
            <person name="Sbrogna J."/>
            <person name="Swartzell S."/>
            <person name="Weir D."/>
            <person name="Hall J."/>
            <person name="Dahl T.A."/>
            <person name="Welti R."/>
            <person name="Goo Y.A."/>
            <person name="Leithauser B."/>
            <person name="Keller K."/>
            <person name="Cruz R."/>
            <person name="Danson M.J."/>
            <person name="Hough D.W."/>
            <person name="Maddocks D.G."/>
            <person name="Jablonski P.E."/>
            <person name="Krebs M.P."/>
            <person name="Angevine C.M."/>
            <person name="Dale H."/>
            <person name="Isenbarger T.A."/>
            <person name="Peck R.F."/>
            <person name="Pohlschroder M."/>
            <person name="Spudich J.L."/>
            <person name="Jung K.-H."/>
            <person name="Alam M."/>
            <person name="Freitas T."/>
            <person name="Hou S."/>
            <person name="Daniels C.J."/>
            <person name="Dennis P.P."/>
            <person name="Omer A.D."/>
            <person name="Ebhardt H."/>
            <person name="Lowe T.M."/>
            <person name="Liang P."/>
            <person name="Riley M."/>
            <person name="Hood L."/>
            <person name="DasSarma S."/>
        </authorList>
    </citation>
    <scope>NUCLEOTIDE SEQUENCE [LARGE SCALE GENOMIC DNA]</scope>
    <source>
        <strain>ATCC 700922 / JCM 11081 / NRC-1</strain>
    </source>
</reference>
<comment type="function">
    <text evidence="1">Catalyzes the ATP-dependent phosphorylation of thiamine-monophosphate (TMP) to form thiamine-pyrophosphate (TPP), the active form of vitamin B1.</text>
</comment>
<comment type="catalytic activity">
    <reaction evidence="1">
        <text>thiamine phosphate + ATP = thiamine diphosphate + ADP</text>
        <dbReference type="Rhea" id="RHEA:15913"/>
        <dbReference type="ChEBI" id="CHEBI:30616"/>
        <dbReference type="ChEBI" id="CHEBI:37575"/>
        <dbReference type="ChEBI" id="CHEBI:58937"/>
        <dbReference type="ChEBI" id="CHEBI:456216"/>
        <dbReference type="EC" id="2.7.4.16"/>
    </reaction>
</comment>
<comment type="pathway">
    <text evidence="1">Cofactor biosynthesis; thiamine diphosphate biosynthesis; thiamine diphosphate from thiamine phosphate: step 1/1.</text>
</comment>
<comment type="miscellaneous">
    <text evidence="1">Reaction mechanism of ThiL seems to utilize a direct, inline transfer of the gamma-phosphate of ATP to TMP rather than a phosphorylated enzyme intermediate.</text>
</comment>
<comment type="similarity">
    <text evidence="1">Belongs to the thiamine-monophosphate kinase family.</text>
</comment>
<gene>
    <name evidence="1" type="primary">thiL</name>
    <name type="ordered locus">VNG_2011G</name>
</gene>
<sequence length="288" mass="28864">MDERAALELVGGLVSRAGDDAAVVGDTALTIDMLHDATDFPSGTTRYTAGWRSVGASLSDVAATGATATAAVAAYGAPGFDDDELAAFVTGARDVCTAVGAEYVGGDLDGHSEFTVATAAIGDADHRVTRSGARPGDSVVVTGSLGRSAAAMALFDAGDTERANDLFQFMPRVAAGRVLGAHATAMMDASDGLARSLHQLAAASDCGMAVDSGRLPVADALAEVTADPVERAVSFGGDFELVAAVPPERVEAARAAVPGSLSVVGRVTAAADGVRLDGDALADDGWTH</sequence>
<protein>
    <recommendedName>
        <fullName evidence="1">Thiamine-monophosphate kinase</fullName>
        <shortName evidence="1">TMP kinase</shortName>
        <shortName evidence="1">Thiamine-phosphate kinase</shortName>
        <ecNumber evidence="1">2.7.4.16</ecNumber>
    </recommendedName>
</protein>
<evidence type="ECO:0000255" key="1">
    <source>
        <dbReference type="HAMAP-Rule" id="MF_02128"/>
    </source>
</evidence>
<name>THIL_HALSA</name>
<organism>
    <name type="scientific">Halobacterium salinarum (strain ATCC 700922 / JCM 11081 / NRC-1)</name>
    <name type="common">Halobacterium halobium</name>
    <dbReference type="NCBI Taxonomy" id="64091"/>
    <lineage>
        <taxon>Archaea</taxon>
        <taxon>Methanobacteriati</taxon>
        <taxon>Methanobacteriota</taxon>
        <taxon>Stenosarchaea group</taxon>
        <taxon>Halobacteria</taxon>
        <taxon>Halobacteriales</taxon>
        <taxon>Halobacteriaceae</taxon>
        <taxon>Halobacterium</taxon>
        <taxon>Halobacterium salinarum NRC-34001</taxon>
    </lineage>
</organism>
<proteinExistence type="inferred from homology"/>
<accession>Q9HNP1</accession>
<feature type="chain" id="PRO_0000415637" description="Thiamine-monophosphate kinase">
    <location>
        <begin position="1"/>
        <end position="288"/>
    </location>
</feature>
<feature type="binding site" evidence="1">
    <location>
        <position position="20"/>
    </location>
    <ligand>
        <name>Mg(2+)</name>
        <dbReference type="ChEBI" id="CHEBI:18420"/>
        <label>3</label>
    </ligand>
</feature>
<feature type="binding site" evidence="1">
    <location>
        <position position="20"/>
    </location>
    <ligand>
        <name>Mg(2+)</name>
        <dbReference type="ChEBI" id="CHEBI:18420"/>
        <label>4</label>
    </ligand>
</feature>
<feature type="binding site" evidence="1">
    <location>
        <position position="30"/>
    </location>
    <ligand>
        <name>Mg(2+)</name>
        <dbReference type="ChEBI" id="CHEBI:18420"/>
        <label>4</label>
    </ligand>
</feature>
<feature type="binding site" evidence="1">
    <location>
        <position position="32"/>
    </location>
    <ligand>
        <name>Mg(2+)</name>
        <dbReference type="ChEBI" id="CHEBI:18420"/>
        <label>1</label>
    </ligand>
</feature>
<feature type="binding site" evidence="1">
    <location>
        <position position="32"/>
    </location>
    <ligand>
        <name>Mg(2+)</name>
        <dbReference type="ChEBI" id="CHEBI:18420"/>
        <label>2</label>
    </ligand>
</feature>
<feature type="binding site" evidence="1">
    <location>
        <position position="39"/>
    </location>
    <ligand>
        <name>substrate</name>
    </ligand>
</feature>
<feature type="binding site" evidence="1">
    <location>
        <position position="60"/>
    </location>
    <ligand>
        <name>Mg(2+)</name>
        <dbReference type="ChEBI" id="CHEBI:18420"/>
        <label>2</label>
    </ligand>
</feature>
<feature type="binding site" evidence="1">
    <location>
        <position position="60"/>
    </location>
    <ligand>
        <name>Mg(2+)</name>
        <dbReference type="ChEBI" id="CHEBI:18420"/>
        <label>3</label>
    </ligand>
</feature>
<feature type="binding site" evidence="1">
    <location>
        <position position="60"/>
    </location>
    <ligand>
        <name>Mg(2+)</name>
        <dbReference type="ChEBI" id="CHEBI:18420"/>
        <label>4</label>
    </ligand>
</feature>
<feature type="binding site" evidence="1">
    <location>
        <begin position="106"/>
        <end position="107"/>
    </location>
    <ligand>
        <name>ATP</name>
        <dbReference type="ChEBI" id="CHEBI:30616"/>
    </ligand>
</feature>
<feature type="binding site" evidence="1">
    <location>
        <position position="107"/>
    </location>
    <ligand>
        <name>Mg(2+)</name>
        <dbReference type="ChEBI" id="CHEBI:18420"/>
        <label>1</label>
    </ligand>
</feature>
<feature type="binding site" evidence="1">
    <location>
        <position position="130"/>
    </location>
    <ligand>
        <name>ATP</name>
        <dbReference type="ChEBI" id="CHEBI:30616"/>
    </ligand>
</feature>
<feature type="binding site" evidence="1">
    <location>
        <position position="188"/>
    </location>
    <ligand>
        <name>Mg(2+)</name>
        <dbReference type="ChEBI" id="CHEBI:18420"/>
        <label>3</label>
    </ligand>
</feature>
<feature type="binding site" evidence="1">
    <location>
        <position position="190"/>
    </location>
    <ligand>
        <name>ATP</name>
        <dbReference type="ChEBI" id="CHEBI:30616"/>
    </ligand>
</feature>
<feature type="binding site" evidence="1">
    <location>
        <position position="191"/>
    </location>
    <ligand>
        <name>Mg(2+)</name>
        <dbReference type="ChEBI" id="CHEBI:18420"/>
        <label>5</label>
    </ligand>
</feature>
<feature type="binding site" evidence="1">
    <location>
        <position position="286"/>
    </location>
    <ligand>
        <name>substrate</name>
    </ligand>
</feature>
<keyword id="KW-0067">ATP-binding</keyword>
<keyword id="KW-0418">Kinase</keyword>
<keyword id="KW-0460">Magnesium</keyword>
<keyword id="KW-0479">Metal-binding</keyword>
<keyword id="KW-0547">Nucleotide-binding</keyword>
<keyword id="KW-1185">Reference proteome</keyword>
<keyword id="KW-0784">Thiamine biosynthesis</keyword>
<keyword id="KW-0808">Transferase</keyword>